<evidence type="ECO:0000255" key="1">
    <source>
        <dbReference type="HAMAP-Rule" id="MF_01038"/>
    </source>
</evidence>
<comment type="function">
    <text evidence="1">Catalyzes the interconversion of 2-phosphoglycerate and 3-phosphoglycerate.</text>
</comment>
<comment type="catalytic activity">
    <reaction evidence="1">
        <text>(2R)-2-phosphoglycerate = (2R)-3-phosphoglycerate</text>
        <dbReference type="Rhea" id="RHEA:15901"/>
        <dbReference type="ChEBI" id="CHEBI:58272"/>
        <dbReference type="ChEBI" id="CHEBI:58289"/>
        <dbReference type="EC" id="5.4.2.12"/>
    </reaction>
</comment>
<comment type="cofactor">
    <cofactor evidence="1">
        <name>Mn(2+)</name>
        <dbReference type="ChEBI" id="CHEBI:29035"/>
    </cofactor>
    <text evidence="1">Binds 2 manganese ions per subunit.</text>
</comment>
<comment type="pathway">
    <text evidence="1">Carbohydrate degradation; glycolysis; pyruvate from D-glyceraldehyde 3-phosphate: step 3/5.</text>
</comment>
<comment type="subunit">
    <text evidence="1">Monomer.</text>
</comment>
<comment type="similarity">
    <text evidence="1">Belongs to the BPG-independent phosphoglycerate mutase family.</text>
</comment>
<accession>Q0HP91</accession>
<dbReference type="EC" id="5.4.2.12" evidence="1"/>
<dbReference type="EMBL" id="CP000446">
    <property type="protein sequence ID" value="ABI37126.1"/>
    <property type="molecule type" value="Genomic_DNA"/>
</dbReference>
<dbReference type="RefSeq" id="WP_011620880.1">
    <property type="nucleotide sequence ID" value="NC_008321.1"/>
</dbReference>
<dbReference type="SMR" id="Q0HP91"/>
<dbReference type="KEGG" id="she:Shewmr4_0045"/>
<dbReference type="HOGENOM" id="CLU_026099_2_0_6"/>
<dbReference type="UniPathway" id="UPA00109">
    <property type="reaction ID" value="UER00186"/>
</dbReference>
<dbReference type="GO" id="GO:0005829">
    <property type="term" value="C:cytosol"/>
    <property type="evidence" value="ECO:0007669"/>
    <property type="project" value="TreeGrafter"/>
</dbReference>
<dbReference type="GO" id="GO:0030145">
    <property type="term" value="F:manganese ion binding"/>
    <property type="evidence" value="ECO:0007669"/>
    <property type="project" value="UniProtKB-UniRule"/>
</dbReference>
<dbReference type="GO" id="GO:0004619">
    <property type="term" value="F:phosphoglycerate mutase activity"/>
    <property type="evidence" value="ECO:0007669"/>
    <property type="project" value="UniProtKB-EC"/>
</dbReference>
<dbReference type="GO" id="GO:0006007">
    <property type="term" value="P:glucose catabolic process"/>
    <property type="evidence" value="ECO:0007669"/>
    <property type="project" value="InterPro"/>
</dbReference>
<dbReference type="GO" id="GO:0006096">
    <property type="term" value="P:glycolytic process"/>
    <property type="evidence" value="ECO:0007669"/>
    <property type="project" value="UniProtKB-UniRule"/>
</dbReference>
<dbReference type="CDD" id="cd16010">
    <property type="entry name" value="iPGM"/>
    <property type="match status" value="1"/>
</dbReference>
<dbReference type="FunFam" id="3.40.1450.10:FF:000001">
    <property type="entry name" value="2,3-bisphosphoglycerate-independent phosphoglycerate mutase"/>
    <property type="match status" value="1"/>
</dbReference>
<dbReference type="FunFam" id="3.40.720.10:FF:000001">
    <property type="entry name" value="2,3-bisphosphoglycerate-independent phosphoglycerate mutase"/>
    <property type="match status" value="1"/>
</dbReference>
<dbReference type="Gene3D" id="3.40.720.10">
    <property type="entry name" value="Alkaline Phosphatase, subunit A"/>
    <property type="match status" value="1"/>
</dbReference>
<dbReference type="Gene3D" id="3.40.1450.10">
    <property type="entry name" value="BPG-independent phosphoglycerate mutase, domain B"/>
    <property type="match status" value="1"/>
</dbReference>
<dbReference type="HAMAP" id="MF_01038">
    <property type="entry name" value="GpmI"/>
    <property type="match status" value="1"/>
</dbReference>
<dbReference type="InterPro" id="IPR017850">
    <property type="entry name" value="Alkaline_phosphatase_core_sf"/>
</dbReference>
<dbReference type="InterPro" id="IPR011258">
    <property type="entry name" value="BPG-indep_PGM_N"/>
</dbReference>
<dbReference type="InterPro" id="IPR006124">
    <property type="entry name" value="Metalloenzyme"/>
</dbReference>
<dbReference type="InterPro" id="IPR036646">
    <property type="entry name" value="PGAM_B_sf"/>
</dbReference>
<dbReference type="InterPro" id="IPR005995">
    <property type="entry name" value="Pgm_bpd_ind"/>
</dbReference>
<dbReference type="NCBIfam" id="TIGR01307">
    <property type="entry name" value="pgm_bpd_ind"/>
    <property type="match status" value="1"/>
</dbReference>
<dbReference type="NCBIfam" id="NF003897">
    <property type="entry name" value="PRK05434.1-5"/>
    <property type="match status" value="1"/>
</dbReference>
<dbReference type="PANTHER" id="PTHR31637">
    <property type="entry name" value="2,3-BISPHOSPHOGLYCERATE-INDEPENDENT PHOSPHOGLYCERATE MUTASE"/>
    <property type="match status" value="1"/>
</dbReference>
<dbReference type="PANTHER" id="PTHR31637:SF0">
    <property type="entry name" value="2,3-BISPHOSPHOGLYCERATE-INDEPENDENT PHOSPHOGLYCERATE MUTASE"/>
    <property type="match status" value="1"/>
</dbReference>
<dbReference type="Pfam" id="PF06415">
    <property type="entry name" value="iPGM_N"/>
    <property type="match status" value="1"/>
</dbReference>
<dbReference type="Pfam" id="PF01676">
    <property type="entry name" value="Metalloenzyme"/>
    <property type="match status" value="1"/>
</dbReference>
<dbReference type="PIRSF" id="PIRSF001492">
    <property type="entry name" value="IPGAM"/>
    <property type="match status" value="1"/>
</dbReference>
<dbReference type="SUPFAM" id="SSF64158">
    <property type="entry name" value="2,3-Bisphosphoglycerate-independent phosphoglycerate mutase, substrate-binding domain"/>
    <property type="match status" value="1"/>
</dbReference>
<dbReference type="SUPFAM" id="SSF53649">
    <property type="entry name" value="Alkaline phosphatase-like"/>
    <property type="match status" value="1"/>
</dbReference>
<proteinExistence type="inferred from homology"/>
<gene>
    <name evidence="1" type="primary">gpmI</name>
    <name type="ordered locus">Shewmr4_0045</name>
</gene>
<organism>
    <name type="scientific">Shewanella sp. (strain MR-4)</name>
    <dbReference type="NCBI Taxonomy" id="60480"/>
    <lineage>
        <taxon>Bacteria</taxon>
        <taxon>Pseudomonadati</taxon>
        <taxon>Pseudomonadota</taxon>
        <taxon>Gammaproteobacteria</taxon>
        <taxon>Alteromonadales</taxon>
        <taxon>Shewanellaceae</taxon>
        <taxon>Shewanella</taxon>
    </lineage>
</organism>
<sequence length="514" mass="55935">MTTTKRPIALLILDGWGYRENTHMNAIYHANTPVLDRLNAQYAHGLISGSGLDVGLPDGQMGNSEVGHINLGSGRIVYQELTRISKAIADHEFEQNPALCDAVDVAVKAGGAVHIMGLLSPGGVHSHEEHIEAMCRMAVARGATKVYLHAFLDGRDTPPRSAKGSLSHFDDLFTTLGHGRIASIIGRYFAMDRDNRWDRVSQAYDLITQGKAKFQYDNAVTALEAAYERNENDEFVSSSAITDSEGKVASLNDGDALIFMNFRADRARQITRSFINADFDGFERAVTPKVNFVTLTEYAADIKAPIAYPSENLVNTLGEVLQNRGRTQLRISETEKYAHVTFFFNGGKEEPFNGEDRILINSPKVATYDLQPEMSSTELTDKLVAAIESAQYDVIICNYPNGDMVGHTGNFDAAVKACEAVDACIGRVVDALAKVGGECIITADHGNAEQMTDETTGQAHTAHTSELVPFVFVGRDATIDEGGKLSDVAPTILHLMGETIPAEMTGKPLIHVKE</sequence>
<feature type="chain" id="PRO_1000064007" description="2,3-bisphosphoglycerate-independent phosphoglycerate mutase">
    <location>
        <begin position="1"/>
        <end position="514"/>
    </location>
</feature>
<feature type="active site" description="Phosphoserine intermediate" evidence="1">
    <location>
        <position position="64"/>
    </location>
</feature>
<feature type="binding site" evidence="1">
    <location>
        <position position="14"/>
    </location>
    <ligand>
        <name>Mn(2+)</name>
        <dbReference type="ChEBI" id="CHEBI:29035"/>
        <label>2</label>
    </ligand>
</feature>
<feature type="binding site" evidence="1">
    <location>
        <position position="64"/>
    </location>
    <ligand>
        <name>Mn(2+)</name>
        <dbReference type="ChEBI" id="CHEBI:29035"/>
        <label>2</label>
    </ligand>
</feature>
<feature type="binding site" evidence="1">
    <location>
        <position position="125"/>
    </location>
    <ligand>
        <name>substrate</name>
    </ligand>
</feature>
<feature type="binding site" evidence="1">
    <location>
        <begin position="155"/>
        <end position="156"/>
    </location>
    <ligand>
        <name>substrate</name>
    </ligand>
</feature>
<feature type="binding site" evidence="1">
    <location>
        <position position="187"/>
    </location>
    <ligand>
        <name>substrate</name>
    </ligand>
</feature>
<feature type="binding site" evidence="1">
    <location>
        <position position="193"/>
    </location>
    <ligand>
        <name>substrate</name>
    </ligand>
</feature>
<feature type="binding site" evidence="1">
    <location>
        <begin position="263"/>
        <end position="266"/>
    </location>
    <ligand>
        <name>substrate</name>
    </ligand>
</feature>
<feature type="binding site" evidence="1">
    <location>
        <position position="336"/>
    </location>
    <ligand>
        <name>substrate</name>
    </ligand>
</feature>
<feature type="binding site" evidence="1">
    <location>
        <position position="403"/>
    </location>
    <ligand>
        <name>Mn(2+)</name>
        <dbReference type="ChEBI" id="CHEBI:29035"/>
        <label>1</label>
    </ligand>
</feature>
<feature type="binding site" evidence="1">
    <location>
        <position position="407"/>
    </location>
    <ligand>
        <name>Mn(2+)</name>
        <dbReference type="ChEBI" id="CHEBI:29035"/>
        <label>1</label>
    </ligand>
</feature>
<feature type="binding site" evidence="1">
    <location>
        <position position="444"/>
    </location>
    <ligand>
        <name>Mn(2+)</name>
        <dbReference type="ChEBI" id="CHEBI:29035"/>
        <label>2</label>
    </ligand>
</feature>
<feature type="binding site" evidence="1">
    <location>
        <position position="445"/>
    </location>
    <ligand>
        <name>Mn(2+)</name>
        <dbReference type="ChEBI" id="CHEBI:29035"/>
        <label>2</label>
    </ligand>
</feature>
<feature type="binding site" evidence="1">
    <location>
        <position position="463"/>
    </location>
    <ligand>
        <name>Mn(2+)</name>
        <dbReference type="ChEBI" id="CHEBI:29035"/>
        <label>1</label>
    </ligand>
</feature>
<reference key="1">
    <citation type="submission" date="2006-08" db="EMBL/GenBank/DDBJ databases">
        <title>Complete sequence of Shewanella sp. MR-4.</title>
        <authorList>
            <consortium name="US DOE Joint Genome Institute"/>
            <person name="Copeland A."/>
            <person name="Lucas S."/>
            <person name="Lapidus A."/>
            <person name="Barry K."/>
            <person name="Detter J.C."/>
            <person name="Glavina del Rio T."/>
            <person name="Hammon N."/>
            <person name="Israni S."/>
            <person name="Dalin E."/>
            <person name="Tice H."/>
            <person name="Pitluck S."/>
            <person name="Kiss H."/>
            <person name="Brettin T."/>
            <person name="Bruce D."/>
            <person name="Han C."/>
            <person name="Tapia R."/>
            <person name="Gilna P."/>
            <person name="Schmutz J."/>
            <person name="Larimer F."/>
            <person name="Land M."/>
            <person name="Hauser L."/>
            <person name="Kyrpides N."/>
            <person name="Mikhailova N."/>
            <person name="Nealson K."/>
            <person name="Konstantinidis K."/>
            <person name="Klappenbach J."/>
            <person name="Tiedje J."/>
            <person name="Richardson P."/>
        </authorList>
    </citation>
    <scope>NUCLEOTIDE SEQUENCE [LARGE SCALE GENOMIC DNA]</scope>
    <source>
        <strain>MR-4</strain>
    </source>
</reference>
<name>GPMI_SHESM</name>
<protein>
    <recommendedName>
        <fullName evidence="1">2,3-bisphosphoglycerate-independent phosphoglycerate mutase</fullName>
        <shortName evidence="1">BPG-independent PGAM</shortName>
        <shortName evidence="1">Phosphoglyceromutase</shortName>
        <shortName evidence="1">iPGM</shortName>
        <ecNumber evidence="1">5.4.2.12</ecNumber>
    </recommendedName>
</protein>
<keyword id="KW-0324">Glycolysis</keyword>
<keyword id="KW-0413">Isomerase</keyword>
<keyword id="KW-0464">Manganese</keyword>
<keyword id="KW-0479">Metal-binding</keyword>